<evidence type="ECO:0000250" key="1"/>
<evidence type="ECO:0000250" key="2">
    <source>
        <dbReference type="UniProtKB" id="P18898"/>
    </source>
</evidence>
<evidence type="ECO:0000250" key="3">
    <source>
        <dbReference type="UniProtKB" id="P53610"/>
    </source>
</evidence>
<evidence type="ECO:0000255" key="4"/>
<evidence type="ECO:0000256" key="5">
    <source>
        <dbReference type="SAM" id="MobiDB-lite"/>
    </source>
</evidence>
<evidence type="ECO:0000269" key="6">
    <source>
    </source>
</evidence>
<evidence type="ECO:0000269" key="7">
    <source>
    </source>
</evidence>
<evidence type="ECO:0000269" key="8">
    <source>
    </source>
</evidence>
<evidence type="ECO:0000305" key="9"/>
<evidence type="ECO:0007744" key="10">
    <source>
    </source>
</evidence>
<comment type="function">
    <text>Catalyzes the transfer of a geranyl-geranyl moiety from geranyl-geranyl pyrophosphate to a cysteine at the fourth position from the C-terminus of proteins having the C-terminal sequence Cys-aliphatic-aliphatic-X (CaaX). Seems to exclusively prenylate CaaX substrates with leucine in the terminal position. The beta subunit is responsible for peptide-binding. May negatively regulate abscisic acid (ABA) signaling in guard cells and auxin-induced lateral root initiation.</text>
</comment>
<comment type="function">
    <text>Negatively regulates ABA signaling in guard cells. in negative regulation of auxin-induced lateral root initiation.</text>
</comment>
<comment type="catalytic activity">
    <reaction>
        <text>geranylgeranyl diphosphate + L-cysteinyl-[protein] = S-geranylgeranyl-L-cysteinyl-[protein] + diphosphate</text>
        <dbReference type="Rhea" id="RHEA:21240"/>
        <dbReference type="Rhea" id="RHEA-COMP:10131"/>
        <dbReference type="Rhea" id="RHEA-COMP:11537"/>
        <dbReference type="ChEBI" id="CHEBI:29950"/>
        <dbReference type="ChEBI" id="CHEBI:33019"/>
        <dbReference type="ChEBI" id="CHEBI:57533"/>
        <dbReference type="ChEBI" id="CHEBI:86021"/>
        <dbReference type="EC" id="2.5.1.59"/>
    </reaction>
</comment>
<comment type="cofactor">
    <cofactor evidence="3">
        <name>Zn(2+)</name>
        <dbReference type="ChEBI" id="CHEBI:29105"/>
    </cofactor>
    <text evidence="3">Binds 1 zinc ion per subunit.</text>
</comment>
<comment type="cofactor">
    <cofactor evidence="2">
        <name>Mg(2+)</name>
        <dbReference type="ChEBI" id="CHEBI:18420"/>
    </cofactor>
</comment>
<comment type="biophysicochemical properties">
    <kinetics>
        <KM evidence="6 8">5.8 uM for CVIM substrate</KM>
        <KM evidence="6 8">3.5 uM for CVIQ substrate</KM>
        <KM evidence="6 8">19 uM for CVII substrate</KM>
        <KM evidence="6 8">17.2 uM for CVIL substrate</KM>
        <text>kcat is 0.5 h(-1), 0.08 h(-1), 0.008 h(-1) and 0.012 h(-1) for CVIL, CVII, CVIQ and CVIM substrates, respectively.</text>
    </kinetics>
    <phDependence>
        <text evidence="6 8">Optimum pH is 7.9-8.5 for CTIL substrate.</text>
    </phDependence>
    <temperatureDependence>
        <text evidence="6 8">Optimum temperature is 30-37 degrees Celsius for CTIL substrate.</text>
    </temperatureDependence>
</comment>
<comment type="subunit">
    <text evidence="1">Heterodimer of an alpha and a beta subunit.</text>
</comment>
<comment type="tissue specificity">
    <text evidence="6">Expressed in roots, leaves, stems, flowers and siliques.</text>
</comment>
<comment type="disruption phenotype">
    <text evidence="7">No visible phenotype under normal growth conditions, but mutant plants have an enhanced response to abscisic acid (ABA)-mediated stomatal closure and increased lateral root formation in response to exogenous auxin.</text>
</comment>
<comment type="similarity">
    <text evidence="9">Belongs to the protein prenyltransferase subunit beta family.</text>
</comment>
<comment type="sequence caution" evidence="9">
    <conflict type="frameshift">
        <sequence resource="EMBL-CDS" id="AAG40865"/>
    </conflict>
</comment>
<name>PGTB1_ARATH</name>
<sequence>MSETAVSIDSDRSKSEEEDEEEYSPPVQSSPSANFEKDRHLMYLEMMYELLPYHYQSQEINRLTLAHFIISGLHFLGARDRVDKDVVAKWVLSFQAFPTNRVSLKDGEFYGFFGSRSSQFPIDENGDLKHNGSHLASTYCALAILKVIGHDLSTIDSKSLLISMINLQQDDGSFMPIHIGGETDLRFVYCAAAICYMLDSWSGMDKESAKNYILNCQSYDGGFGLIPGSESHGGATYCAIASLRLMGYIGVDLLSNDSSSSIIDPSLLLNWCLQRQANDGGFQGRTNKPSDTCYAFWIGAVLKLIGGDALIDKMALRKFLMSCQSKYGGFSKFPGQLPDLYHSYYGYTAFSLLEEQGLSPLCPELGLPLLAAPGI</sequence>
<accession>O80642</accession>
<accession>Q9FPP6</accession>
<organism>
    <name type="scientific">Arabidopsis thaliana</name>
    <name type="common">Mouse-ear cress</name>
    <dbReference type="NCBI Taxonomy" id="3702"/>
    <lineage>
        <taxon>Eukaryota</taxon>
        <taxon>Viridiplantae</taxon>
        <taxon>Streptophyta</taxon>
        <taxon>Embryophyta</taxon>
        <taxon>Tracheophyta</taxon>
        <taxon>Spermatophyta</taxon>
        <taxon>Magnoliopsida</taxon>
        <taxon>eudicotyledons</taxon>
        <taxon>Gunneridae</taxon>
        <taxon>Pentapetalae</taxon>
        <taxon>rosids</taxon>
        <taxon>malvids</taxon>
        <taxon>Brassicales</taxon>
        <taxon>Brassicaceae</taxon>
        <taxon>Camelineae</taxon>
        <taxon>Arabidopsis</taxon>
    </lineage>
</organism>
<proteinExistence type="evidence at protein level"/>
<gene>
    <name type="primary">GGB</name>
    <name type="synonym">PGGT1B</name>
    <name type="synonym">PGGTI</name>
    <name type="ordered locus">At2g39550</name>
    <name type="ORF">F12L6</name>
</gene>
<feature type="initiator methionine" description="Removed" evidence="10">
    <location>
        <position position="1"/>
    </location>
</feature>
<feature type="chain" id="PRO_0000422982" description="Geranylgeranyl transferase type-1 subunit beta">
    <location>
        <begin position="2"/>
        <end position="375"/>
    </location>
</feature>
<feature type="repeat" description="PFTB 1" evidence="4">
    <location>
        <begin position="157"/>
        <end position="199"/>
    </location>
</feature>
<feature type="repeat" description="PFTB 2" evidence="4">
    <location>
        <begin position="206"/>
        <end position="247"/>
    </location>
</feature>
<feature type="repeat" description="PFTB 3" evidence="4">
    <location>
        <begin position="265"/>
        <end position="306"/>
    </location>
</feature>
<feature type="repeat" description="PFTB 4" evidence="4">
    <location>
        <begin position="313"/>
        <end position="354"/>
    </location>
</feature>
<feature type="region of interest" description="Disordered" evidence="5">
    <location>
        <begin position="1"/>
        <end position="33"/>
    </location>
</feature>
<feature type="binding site" evidence="3">
    <location>
        <begin position="232"/>
        <end position="234"/>
    </location>
    <ligand>
        <name>geranylgeranyl diphosphate</name>
        <dbReference type="ChEBI" id="CHEBI:57533"/>
    </ligand>
</feature>
<feature type="binding site" evidence="3">
    <location>
        <begin position="285"/>
        <end position="288"/>
    </location>
    <ligand>
        <name>geranylgeranyl diphosphate</name>
        <dbReference type="ChEBI" id="CHEBI:57533"/>
    </ligand>
</feature>
<feature type="binding site" evidence="3">
    <location>
        <position position="291"/>
    </location>
    <ligand>
        <name>Zn(2+)</name>
        <dbReference type="ChEBI" id="CHEBI:29105"/>
        <note>catalytic</note>
    </ligand>
</feature>
<feature type="binding site" evidence="3">
    <location>
        <position position="293"/>
    </location>
    <ligand>
        <name>Zn(2+)</name>
        <dbReference type="ChEBI" id="CHEBI:29105"/>
        <note>catalytic</note>
    </ligand>
</feature>
<feature type="binding site" evidence="3">
    <location>
        <begin position="294"/>
        <end position="297"/>
    </location>
    <ligand>
        <name>geranylgeranyl diphosphate</name>
        <dbReference type="ChEBI" id="CHEBI:57533"/>
    </ligand>
</feature>
<feature type="binding site" evidence="3">
    <location>
        <position position="342"/>
    </location>
    <ligand>
        <name>Zn(2+)</name>
        <dbReference type="ChEBI" id="CHEBI:29105"/>
        <note>catalytic</note>
    </ligand>
</feature>
<feature type="modified residue" description="N-acetylserine" evidence="10">
    <location>
        <position position="2"/>
    </location>
</feature>
<feature type="sequence conflict" description="In Ref. 1; AAG40865." evidence="9" ref="1">
    <original>D</original>
    <variation>Y</variation>
    <location>
        <position position="85"/>
    </location>
</feature>
<feature type="sequence conflict" description="In Ref. 1; AAG40865." evidence="9" ref="1">
    <original>L</original>
    <variation>S</variation>
    <location>
        <position position="358"/>
    </location>
</feature>
<feature type="sequence conflict" description="In Ref. 1; AAG40865." evidence="9" ref="1">
    <original>L</original>
    <variation>F</variation>
    <location>
        <position position="369"/>
    </location>
</feature>
<keyword id="KW-0007">Acetylation</keyword>
<keyword id="KW-0460">Magnesium</keyword>
<keyword id="KW-0479">Metal-binding</keyword>
<keyword id="KW-0637">Prenyltransferase</keyword>
<keyword id="KW-1185">Reference proteome</keyword>
<keyword id="KW-0677">Repeat</keyword>
<keyword id="KW-0808">Transferase</keyword>
<keyword id="KW-0862">Zinc</keyword>
<reference key="1">
    <citation type="journal article" date="2001" name="Plant Physiol.">
        <title>Efficient prenylation by a plant geranylgeranyltransferase-I requires a functional CaaL box motif and a proximal polybasic domain.</title>
        <authorList>
            <person name="Caldelari D."/>
            <person name="Sternberg H."/>
            <person name="Rodriguez-Concepcion M."/>
            <person name="Gruissem W."/>
            <person name="Yalovsky S."/>
        </authorList>
    </citation>
    <scope>NUCLEOTIDE SEQUENCE [MRNA]</scope>
    <scope>FUNCTION</scope>
    <scope>BIOPHYSICOCHEMICAL PROPERTIES</scope>
    <scope>TISSUE SPECIFICITY</scope>
</reference>
<reference key="2">
    <citation type="journal article" date="1999" name="Nature">
        <title>Sequence and analysis of chromosome 2 of the plant Arabidopsis thaliana.</title>
        <authorList>
            <person name="Lin X."/>
            <person name="Kaul S."/>
            <person name="Rounsley S.D."/>
            <person name="Shea T.P."/>
            <person name="Benito M.-I."/>
            <person name="Town C.D."/>
            <person name="Fujii C.Y."/>
            <person name="Mason T.M."/>
            <person name="Bowman C.L."/>
            <person name="Barnstead M.E."/>
            <person name="Feldblyum T.V."/>
            <person name="Buell C.R."/>
            <person name="Ketchum K.A."/>
            <person name="Lee J.J."/>
            <person name="Ronning C.M."/>
            <person name="Koo H.L."/>
            <person name="Moffat K.S."/>
            <person name="Cronin L.A."/>
            <person name="Shen M."/>
            <person name="Pai G."/>
            <person name="Van Aken S."/>
            <person name="Umayam L."/>
            <person name="Tallon L.J."/>
            <person name="Gill J.E."/>
            <person name="Adams M.D."/>
            <person name="Carrera A.J."/>
            <person name="Creasy T.H."/>
            <person name="Goodman H.M."/>
            <person name="Somerville C.R."/>
            <person name="Copenhaver G.P."/>
            <person name="Preuss D."/>
            <person name="Nierman W.C."/>
            <person name="White O."/>
            <person name="Eisen J.A."/>
            <person name="Salzberg S.L."/>
            <person name="Fraser C.M."/>
            <person name="Venter J.C."/>
        </authorList>
    </citation>
    <scope>NUCLEOTIDE SEQUENCE [LARGE SCALE GENOMIC DNA]</scope>
    <source>
        <strain>cv. Columbia</strain>
    </source>
</reference>
<reference key="3">
    <citation type="journal article" date="2017" name="Plant J.">
        <title>Araport11: a complete reannotation of the Arabidopsis thaliana reference genome.</title>
        <authorList>
            <person name="Cheng C.Y."/>
            <person name="Krishnakumar V."/>
            <person name="Chan A.P."/>
            <person name="Thibaud-Nissen F."/>
            <person name="Schobel S."/>
            <person name="Town C.D."/>
        </authorList>
    </citation>
    <scope>GENOME REANNOTATION</scope>
    <source>
        <strain>cv. Columbia</strain>
    </source>
</reference>
<reference key="4">
    <citation type="journal article" date="2003" name="Science">
        <title>Empirical analysis of transcriptional activity in the Arabidopsis genome.</title>
        <authorList>
            <person name="Yamada K."/>
            <person name="Lim J."/>
            <person name="Dale J.M."/>
            <person name="Chen H."/>
            <person name="Shinn P."/>
            <person name="Palm C.J."/>
            <person name="Southwick A.M."/>
            <person name="Wu H.C."/>
            <person name="Kim C.J."/>
            <person name="Nguyen M."/>
            <person name="Pham P.K."/>
            <person name="Cheuk R.F."/>
            <person name="Karlin-Newmann G."/>
            <person name="Liu S.X."/>
            <person name="Lam B."/>
            <person name="Sakano H."/>
            <person name="Wu T."/>
            <person name="Yu G."/>
            <person name="Miranda M."/>
            <person name="Quach H.L."/>
            <person name="Tripp M."/>
            <person name="Chang C.H."/>
            <person name="Lee J.M."/>
            <person name="Toriumi M.J."/>
            <person name="Chan M.M."/>
            <person name="Tang C.C."/>
            <person name="Onodera C.S."/>
            <person name="Deng J.M."/>
            <person name="Akiyama K."/>
            <person name="Ansari Y."/>
            <person name="Arakawa T."/>
            <person name="Banh J."/>
            <person name="Banno F."/>
            <person name="Bowser L."/>
            <person name="Brooks S.Y."/>
            <person name="Carninci P."/>
            <person name="Chao Q."/>
            <person name="Choy N."/>
            <person name="Enju A."/>
            <person name="Goldsmith A.D."/>
            <person name="Gurjal M."/>
            <person name="Hansen N.F."/>
            <person name="Hayashizaki Y."/>
            <person name="Johnson-Hopson C."/>
            <person name="Hsuan V.W."/>
            <person name="Iida K."/>
            <person name="Karnes M."/>
            <person name="Khan S."/>
            <person name="Koesema E."/>
            <person name="Ishida J."/>
            <person name="Jiang P.X."/>
            <person name="Jones T."/>
            <person name="Kawai J."/>
            <person name="Kamiya A."/>
            <person name="Meyers C."/>
            <person name="Nakajima M."/>
            <person name="Narusaka M."/>
            <person name="Seki M."/>
            <person name="Sakurai T."/>
            <person name="Satou M."/>
            <person name="Tamse R."/>
            <person name="Vaysberg M."/>
            <person name="Wallender E.K."/>
            <person name="Wong C."/>
            <person name="Yamamura Y."/>
            <person name="Yuan S."/>
            <person name="Shinozaki K."/>
            <person name="Davis R.W."/>
            <person name="Theologis A."/>
            <person name="Ecker J.R."/>
        </authorList>
    </citation>
    <scope>NUCLEOTIDE SEQUENCE [LARGE SCALE MRNA]</scope>
    <source>
        <strain>cv. Columbia</strain>
    </source>
</reference>
<reference key="5">
    <citation type="journal article" date="2005" name="Plant Physiol.">
        <title>Protein geranylgeranyltransferase I is involved in specific aspects of abscisic acid and auxin signaling in Arabidopsis.</title>
        <authorList>
            <person name="Johnson C.D."/>
            <person name="Chary S.N."/>
            <person name="Chernoff E.A."/>
            <person name="Zeng Q."/>
            <person name="Running M.P."/>
            <person name="Crowell D.N."/>
        </authorList>
    </citation>
    <scope>FUNCTION</scope>
    <scope>DISRUPTION PHENOTYPE</scope>
    <source>
        <strain>cv. Columbia</strain>
        <strain>cv. Wassilewskija</strain>
    </source>
</reference>
<reference key="6">
    <citation type="journal article" date="2010" name="BMC Plant Biol.">
        <title>The CaaX specificities of Arabidopsis protein prenyltransferases explain era1 and ggb phenotypes.</title>
        <authorList>
            <person name="Andrews M."/>
            <person name="Huizinga D.H."/>
            <person name="Crowell D.N."/>
        </authorList>
    </citation>
    <scope>FUNCTION</scope>
    <scope>BIOPHYSICOCHEMICAL PROPERTIES</scope>
</reference>
<reference key="7">
    <citation type="journal article" date="2012" name="Mol. Cell. Proteomics">
        <title>Comparative large-scale characterisation of plant vs. mammal proteins reveals similar and idiosyncratic N-alpha acetylation features.</title>
        <authorList>
            <person name="Bienvenut W.V."/>
            <person name="Sumpton D."/>
            <person name="Martinez A."/>
            <person name="Lilla S."/>
            <person name="Espagne C."/>
            <person name="Meinnel T."/>
            <person name="Giglione C."/>
        </authorList>
    </citation>
    <scope>ACETYLATION [LARGE SCALE ANALYSIS] AT SER-2</scope>
    <scope>CLEAVAGE OF INITIATOR METHIONINE [LARGE SCALE ANALYSIS]</scope>
    <scope>IDENTIFICATION BY MASS SPECTROMETRY [LARGE SCALE ANALYSIS]</scope>
</reference>
<protein>
    <recommendedName>
        <fullName>Geranylgeranyl transferase type-1 subunit beta</fullName>
        <ecNumber>2.5.1.59</ecNumber>
    </recommendedName>
    <alternativeName>
        <fullName>Geranylgeranyl transferase type I subunit beta</fullName>
        <shortName>AtGGT-IB</shortName>
        <shortName>GGTase-I-beta</shortName>
    </alternativeName>
</protein>
<dbReference type="EC" id="2.5.1.59"/>
<dbReference type="EMBL" id="AF311225">
    <property type="protein sequence ID" value="AAG40865.1"/>
    <property type="status" value="ALT_FRAME"/>
    <property type="molecule type" value="mRNA"/>
</dbReference>
<dbReference type="EMBL" id="AC004218">
    <property type="protein sequence ID" value="AAC27846.1"/>
    <property type="molecule type" value="Genomic_DNA"/>
</dbReference>
<dbReference type="EMBL" id="CP002685">
    <property type="protein sequence ID" value="AEC09693.1"/>
    <property type="molecule type" value="Genomic_DNA"/>
</dbReference>
<dbReference type="EMBL" id="BT002465">
    <property type="protein sequence ID" value="AAO00825.1"/>
    <property type="molecule type" value="mRNA"/>
</dbReference>
<dbReference type="EMBL" id="BT008464">
    <property type="protein sequence ID" value="AAP37823.1"/>
    <property type="molecule type" value="mRNA"/>
</dbReference>
<dbReference type="PIR" id="T00565">
    <property type="entry name" value="T00565"/>
</dbReference>
<dbReference type="SMR" id="O80642"/>
<dbReference type="BioGRID" id="3878">
    <property type="interactions" value="5"/>
</dbReference>
<dbReference type="FunCoup" id="O80642">
    <property type="interactions" value="3960"/>
</dbReference>
<dbReference type="STRING" id="3702.O80642"/>
<dbReference type="iPTMnet" id="O80642"/>
<dbReference type="PaxDb" id="3702-AT2G39550.1"/>
<dbReference type="ProteomicsDB" id="235010"/>
<dbReference type="EnsemblPlants" id="AT2G39550.1">
    <property type="protein sequence ID" value="AT2G39550.1"/>
    <property type="gene ID" value="AT2G39550"/>
</dbReference>
<dbReference type="GeneID" id="818540"/>
<dbReference type="Gramene" id="AT2G39550.1">
    <property type="protein sequence ID" value="AT2G39550.1"/>
    <property type="gene ID" value="AT2G39550"/>
</dbReference>
<dbReference type="KEGG" id="ath:AT2G39550"/>
<dbReference type="Araport" id="AT2G39550"/>
<dbReference type="TAIR" id="AT2G39550">
    <property type="gene designation" value="PGGT-I"/>
</dbReference>
<dbReference type="eggNOG" id="KOG0367">
    <property type="taxonomic scope" value="Eukaryota"/>
</dbReference>
<dbReference type="HOGENOM" id="CLU_028946_2_2_1"/>
<dbReference type="InParanoid" id="O80642"/>
<dbReference type="OMA" id="RWCLMRQ"/>
<dbReference type="OrthoDB" id="24893at2759"/>
<dbReference type="PhylomeDB" id="O80642"/>
<dbReference type="BioCyc" id="ARA:AT2G39550-MONOMER"/>
<dbReference type="BioCyc" id="MetaCyc:AT2G39550-MONOMER"/>
<dbReference type="PRO" id="PR:O80642"/>
<dbReference type="Proteomes" id="UP000006548">
    <property type="component" value="Chromosome 2"/>
</dbReference>
<dbReference type="ExpressionAtlas" id="O80642">
    <property type="expression patterns" value="baseline and differential"/>
</dbReference>
<dbReference type="GO" id="GO:0005953">
    <property type="term" value="C:CAAX-protein geranylgeranyltransferase complex"/>
    <property type="evidence" value="ECO:0007669"/>
    <property type="project" value="InterPro"/>
</dbReference>
<dbReference type="GO" id="GO:0004662">
    <property type="term" value="F:CAAX-protein geranylgeranyltransferase activity"/>
    <property type="evidence" value="ECO:0000315"/>
    <property type="project" value="TAIR"/>
</dbReference>
<dbReference type="GO" id="GO:0046872">
    <property type="term" value="F:metal ion binding"/>
    <property type="evidence" value="ECO:0007669"/>
    <property type="project" value="UniProtKB-KW"/>
</dbReference>
<dbReference type="GO" id="GO:0009788">
    <property type="term" value="P:negative regulation of abscisic acid-activated signaling pathway"/>
    <property type="evidence" value="ECO:0000304"/>
    <property type="project" value="TAIR"/>
</dbReference>
<dbReference type="GO" id="GO:0018344">
    <property type="term" value="P:protein geranylgeranylation"/>
    <property type="evidence" value="ECO:0000315"/>
    <property type="project" value="TAIR"/>
</dbReference>
<dbReference type="GO" id="GO:0009737">
    <property type="term" value="P:response to abscisic acid"/>
    <property type="evidence" value="ECO:0000315"/>
    <property type="project" value="TAIR"/>
</dbReference>
<dbReference type="GO" id="GO:0009733">
    <property type="term" value="P:response to auxin"/>
    <property type="evidence" value="ECO:0000315"/>
    <property type="project" value="TAIR"/>
</dbReference>
<dbReference type="GO" id="GO:0009414">
    <property type="term" value="P:response to water deprivation"/>
    <property type="evidence" value="ECO:0000315"/>
    <property type="project" value="TAIR"/>
</dbReference>
<dbReference type="CDD" id="cd02895">
    <property type="entry name" value="GGTase-I"/>
    <property type="match status" value="1"/>
</dbReference>
<dbReference type="FunFam" id="1.50.10.20:FF:000021">
    <property type="entry name" value="Geranylgeranyl transferase type-1 subunit beta"/>
    <property type="match status" value="1"/>
</dbReference>
<dbReference type="Gene3D" id="1.50.10.20">
    <property type="match status" value="1"/>
</dbReference>
<dbReference type="InterPro" id="IPR041960">
    <property type="entry name" value="GGTase_I_beta"/>
</dbReference>
<dbReference type="InterPro" id="IPR045089">
    <property type="entry name" value="PGGT1B-like"/>
</dbReference>
<dbReference type="InterPro" id="IPR001330">
    <property type="entry name" value="Prenyltrans"/>
</dbReference>
<dbReference type="InterPro" id="IPR008930">
    <property type="entry name" value="Terpenoid_cyclase/PrenylTrfase"/>
</dbReference>
<dbReference type="PANTHER" id="PTHR11774">
    <property type="entry name" value="GERANYLGERANYL TRANSFERASE TYPE BETA SUBUNIT"/>
    <property type="match status" value="1"/>
</dbReference>
<dbReference type="PANTHER" id="PTHR11774:SF4">
    <property type="entry name" value="GERANYLGERANYL TRANSFERASE TYPE-1 SUBUNIT BETA"/>
    <property type="match status" value="1"/>
</dbReference>
<dbReference type="Pfam" id="PF00432">
    <property type="entry name" value="Prenyltrans"/>
    <property type="match status" value="1"/>
</dbReference>
<dbReference type="SUPFAM" id="SSF48239">
    <property type="entry name" value="Terpenoid cyclases/Protein prenyltransferases"/>
    <property type="match status" value="1"/>
</dbReference>